<organism>
    <name type="scientific">Thermoanaerobacter sp. (strain X514)</name>
    <dbReference type="NCBI Taxonomy" id="399726"/>
    <lineage>
        <taxon>Bacteria</taxon>
        <taxon>Bacillati</taxon>
        <taxon>Bacillota</taxon>
        <taxon>Clostridia</taxon>
        <taxon>Thermoanaerobacterales</taxon>
        <taxon>Thermoanaerobacteraceae</taxon>
        <taxon>Thermoanaerobacter</taxon>
    </lineage>
</organism>
<dbReference type="EC" id="6.1.1.6" evidence="1"/>
<dbReference type="EMBL" id="CP000923">
    <property type="protein sequence ID" value="ABY92113.1"/>
    <property type="molecule type" value="Genomic_DNA"/>
</dbReference>
<dbReference type="RefSeq" id="WP_009052981.1">
    <property type="nucleotide sequence ID" value="NC_010320.1"/>
</dbReference>
<dbReference type="SMR" id="B0K5C0"/>
<dbReference type="KEGG" id="tex:Teth514_0810"/>
<dbReference type="HOGENOM" id="CLU_008255_6_0_9"/>
<dbReference type="Proteomes" id="UP000002155">
    <property type="component" value="Chromosome"/>
</dbReference>
<dbReference type="GO" id="GO:0005829">
    <property type="term" value="C:cytosol"/>
    <property type="evidence" value="ECO:0007669"/>
    <property type="project" value="TreeGrafter"/>
</dbReference>
<dbReference type="GO" id="GO:0005524">
    <property type="term" value="F:ATP binding"/>
    <property type="evidence" value="ECO:0007669"/>
    <property type="project" value="UniProtKB-UniRule"/>
</dbReference>
<dbReference type="GO" id="GO:0140096">
    <property type="term" value="F:catalytic activity, acting on a protein"/>
    <property type="evidence" value="ECO:0007669"/>
    <property type="project" value="UniProtKB-ARBA"/>
</dbReference>
<dbReference type="GO" id="GO:0004824">
    <property type="term" value="F:lysine-tRNA ligase activity"/>
    <property type="evidence" value="ECO:0007669"/>
    <property type="project" value="UniProtKB-UniRule"/>
</dbReference>
<dbReference type="GO" id="GO:0000287">
    <property type="term" value="F:magnesium ion binding"/>
    <property type="evidence" value="ECO:0007669"/>
    <property type="project" value="UniProtKB-UniRule"/>
</dbReference>
<dbReference type="GO" id="GO:0016740">
    <property type="term" value="F:transferase activity"/>
    <property type="evidence" value="ECO:0007669"/>
    <property type="project" value="UniProtKB-ARBA"/>
</dbReference>
<dbReference type="GO" id="GO:0000049">
    <property type="term" value="F:tRNA binding"/>
    <property type="evidence" value="ECO:0007669"/>
    <property type="project" value="TreeGrafter"/>
</dbReference>
<dbReference type="GO" id="GO:0006430">
    <property type="term" value="P:lysyl-tRNA aminoacylation"/>
    <property type="evidence" value="ECO:0007669"/>
    <property type="project" value="UniProtKB-UniRule"/>
</dbReference>
<dbReference type="CDD" id="cd00775">
    <property type="entry name" value="LysRS_core"/>
    <property type="match status" value="1"/>
</dbReference>
<dbReference type="CDD" id="cd04322">
    <property type="entry name" value="LysRS_N"/>
    <property type="match status" value="1"/>
</dbReference>
<dbReference type="FunFam" id="2.40.50.140:FF:000024">
    <property type="entry name" value="Lysine--tRNA ligase"/>
    <property type="match status" value="1"/>
</dbReference>
<dbReference type="FunFam" id="3.30.930.10:FF:000001">
    <property type="entry name" value="Lysine--tRNA ligase"/>
    <property type="match status" value="1"/>
</dbReference>
<dbReference type="Gene3D" id="3.30.930.10">
    <property type="entry name" value="Bira Bifunctional Protein, Domain 2"/>
    <property type="match status" value="1"/>
</dbReference>
<dbReference type="Gene3D" id="2.40.50.140">
    <property type="entry name" value="Nucleic acid-binding proteins"/>
    <property type="match status" value="1"/>
</dbReference>
<dbReference type="HAMAP" id="MF_00252">
    <property type="entry name" value="Lys_tRNA_synth_class2"/>
    <property type="match status" value="1"/>
</dbReference>
<dbReference type="InterPro" id="IPR004364">
    <property type="entry name" value="Aa-tRNA-synt_II"/>
</dbReference>
<dbReference type="InterPro" id="IPR006195">
    <property type="entry name" value="aa-tRNA-synth_II"/>
</dbReference>
<dbReference type="InterPro" id="IPR045864">
    <property type="entry name" value="aa-tRNA-synth_II/BPL/LPL"/>
</dbReference>
<dbReference type="InterPro" id="IPR002313">
    <property type="entry name" value="Lys-tRNA-ligase_II"/>
</dbReference>
<dbReference type="InterPro" id="IPR034762">
    <property type="entry name" value="Lys-tRNA-ligase_II_bac/euk"/>
</dbReference>
<dbReference type="InterPro" id="IPR044136">
    <property type="entry name" value="Lys-tRNA-ligase_II_N"/>
</dbReference>
<dbReference type="InterPro" id="IPR018149">
    <property type="entry name" value="Lys-tRNA-synth_II_C"/>
</dbReference>
<dbReference type="InterPro" id="IPR012340">
    <property type="entry name" value="NA-bd_OB-fold"/>
</dbReference>
<dbReference type="InterPro" id="IPR004365">
    <property type="entry name" value="NA-bd_OB_tRNA"/>
</dbReference>
<dbReference type="NCBIfam" id="TIGR00499">
    <property type="entry name" value="lysS_bact"/>
    <property type="match status" value="1"/>
</dbReference>
<dbReference type="NCBIfam" id="NF001756">
    <property type="entry name" value="PRK00484.1"/>
    <property type="match status" value="1"/>
</dbReference>
<dbReference type="PANTHER" id="PTHR42918:SF15">
    <property type="entry name" value="LYSINE--TRNA LIGASE, CHLOROPLASTIC_MITOCHONDRIAL"/>
    <property type="match status" value="1"/>
</dbReference>
<dbReference type="PANTHER" id="PTHR42918">
    <property type="entry name" value="LYSYL-TRNA SYNTHETASE"/>
    <property type="match status" value="1"/>
</dbReference>
<dbReference type="Pfam" id="PF00152">
    <property type="entry name" value="tRNA-synt_2"/>
    <property type="match status" value="1"/>
</dbReference>
<dbReference type="Pfam" id="PF01336">
    <property type="entry name" value="tRNA_anti-codon"/>
    <property type="match status" value="1"/>
</dbReference>
<dbReference type="PIRSF" id="PIRSF039101">
    <property type="entry name" value="LysRS2"/>
    <property type="match status" value="1"/>
</dbReference>
<dbReference type="PRINTS" id="PR00982">
    <property type="entry name" value="TRNASYNTHLYS"/>
</dbReference>
<dbReference type="SUPFAM" id="SSF55681">
    <property type="entry name" value="Class II aaRS and biotin synthetases"/>
    <property type="match status" value="1"/>
</dbReference>
<dbReference type="SUPFAM" id="SSF50249">
    <property type="entry name" value="Nucleic acid-binding proteins"/>
    <property type="match status" value="1"/>
</dbReference>
<dbReference type="PROSITE" id="PS50862">
    <property type="entry name" value="AA_TRNA_LIGASE_II"/>
    <property type="match status" value="1"/>
</dbReference>
<evidence type="ECO:0000255" key="1">
    <source>
        <dbReference type="HAMAP-Rule" id="MF_00252"/>
    </source>
</evidence>
<protein>
    <recommendedName>
        <fullName evidence="1">Lysine--tRNA ligase</fullName>
        <ecNumber evidence="1">6.1.1.6</ecNumber>
    </recommendedName>
    <alternativeName>
        <fullName evidence="1">Lysyl-tRNA synthetase</fullName>
        <shortName evidence="1">LysRS</shortName>
    </alternativeName>
</protein>
<accession>B0K5C0</accession>
<gene>
    <name evidence="1" type="primary">lysS</name>
    <name type="ordered locus">Teth514_0810</name>
</gene>
<name>SYK_THEPX</name>
<reference key="1">
    <citation type="submission" date="2008-01" db="EMBL/GenBank/DDBJ databases">
        <title>Complete sequence of Thermoanaerobacter sp. X514.</title>
        <authorList>
            <consortium name="US DOE Joint Genome Institute"/>
            <person name="Copeland A."/>
            <person name="Lucas S."/>
            <person name="Lapidus A."/>
            <person name="Barry K."/>
            <person name="Glavina del Rio T."/>
            <person name="Dalin E."/>
            <person name="Tice H."/>
            <person name="Pitluck S."/>
            <person name="Bruce D."/>
            <person name="Goodwin L."/>
            <person name="Saunders E."/>
            <person name="Brettin T."/>
            <person name="Detter J.C."/>
            <person name="Han C."/>
            <person name="Schmutz J."/>
            <person name="Larimer F."/>
            <person name="Land M."/>
            <person name="Hauser L."/>
            <person name="Kyrpides N."/>
            <person name="Kim E."/>
            <person name="Hemme C."/>
            <person name="Fields M.W."/>
            <person name="He Z."/>
            <person name="Zhou J."/>
            <person name="Richardson P."/>
        </authorList>
    </citation>
    <scope>NUCLEOTIDE SEQUENCE [LARGE SCALE GENOMIC DNA]</scope>
    <source>
        <strain>X514</strain>
    </source>
</reference>
<comment type="catalytic activity">
    <reaction evidence="1">
        <text>tRNA(Lys) + L-lysine + ATP = L-lysyl-tRNA(Lys) + AMP + diphosphate</text>
        <dbReference type="Rhea" id="RHEA:20792"/>
        <dbReference type="Rhea" id="RHEA-COMP:9696"/>
        <dbReference type="Rhea" id="RHEA-COMP:9697"/>
        <dbReference type="ChEBI" id="CHEBI:30616"/>
        <dbReference type="ChEBI" id="CHEBI:32551"/>
        <dbReference type="ChEBI" id="CHEBI:33019"/>
        <dbReference type="ChEBI" id="CHEBI:78442"/>
        <dbReference type="ChEBI" id="CHEBI:78529"/>
        <dbReference type="ChEBI" id="CHEBI:456215"/>
        <dbReference type="EC" id="6.1.1.6"/>
    </reaction>
</comment>
<comment type="cofactor">
    <cofactor evidence="1">
        <name>Mg(2+)</name>
        <dbReference type="ChEBI" id="CHEBI:18420"/>
    </cofactor>
    <text evidence="1">Binds 3 Mg(2+) ions per subunit.</text>
</comment>
<comment type="subunit">
    <text evidence="1">Homodimer.</text>
</comment>
<comment type="subcellular location">
    <subcellularLocation>
        <location evidence="1">Cytoplasm</location>
    </subcellularLocation>
</comment>
<comment type="similarity">
    <text evidence="1">Belongs to the class-II aminoacyl-tRNA synthetase family.</text>
</comment>
<keyword id="KW-0030">Aminoacyl-tRNA synthetase</keyword>
<keyword id="KW-0067">ATP-binding</keyword>
<keyword id="KW-0963">Cytoplasm</keyword>
<keyword id="KW-0436">Ligase</keyword>
<keyword id="KW-0460">Magnesium</keyword>
<keyword id="KW-0479">Metal-binding</keyword>
<keyword id="KW-0547">Nucleotide-binding</keyword>
<keyword id="KW-0648">Protein biosynthesis</keyword>
<feature type="chain" id="PRO_1000101155" description="Lysine--tRNA ligase">
    <location>
        <begin position="1"/>
        <end position="499"/>
    </location>
</feature>
<feature type="binding site" evidence="1">
    <location>
        <position position="408"/>
    </location>
    <ligand>
        <name>Mg(2+)</name>
        <dbReference type="ChEBI" id="CHEBI:18420"/>
        <label>1</label>
    </ligand>
</feature>
<feature type="binding site" evidence="1">
    <location>
        <position position="415"/>
    </location>
    <ligand>
        <name>Mg(2+)</name>
        <dbReference type="ChEBI" id="CHEBI:18420"/>
        <label>1</label>
    </ligand>
</feature>
<feature type="binding site" evidence="1">
    <location>
        <position position="415"/>
    </location>
    <ligand>
        <name>Mg(2+)</name>
        <dbReference type="ChEBI" id="CHEBI:18420"/>
        <label>2</label>
    </ligand>
</feature>
<proteinExistence type="inferred from homology"/>
<sequence>MSNSNDNIWNNTEELNELLRIRREKLNILRSMGIEPYGIDRFERTNVSSDIKNDYENFEGKVVTLAGRIMSKRAHGKASFADIQDRDGRIQIYVKYDTVGEKNYEIFKILDIGDIIGVTGEVFKSKTGEITIRVTDFKLLSKSLQILPEKWHGLKDPDLRYRQRYTDLIINPEVKEVFLKRTKIIKAIREFLDNRGFLEVETPILHTIAGGAAARPFITHHNALDIDMYLRIALELHLKRLIVGGLEKVYEMGRVFRNEGMDIRHNPEFTLLELYEAYTDYYGMMELTEQLFAYVAQKVNGTTKIVYQGTEIDLTPPWKRITMVDAIKEYVGVDFNEVKADAEAVEIAKRLNLETKEGMKKGEVIALVFDELVEQHLIQPTFVMDYPVEISPLAKRKHDNPAFTSRFEAFIYGREVANAFSELNDPIDQKERFLEQLKQREAGDEEAHMMDEDFINALEVGMPPTGGLGIGVDRLVMFMTDAYSIRDVILFPTMKPKND</sequence>